<proteinExistence type="evidence at protein level"/>
<evidence type="ECO:0000250" key="1">
    <source>
        <dbReference type="UniProtKB" id="Q66HD5"/>
    </source>
</evidence>
<evidence type="ECO:0000250" key="2">
    <source>
        <dbReference type="UniProtKB" id="Q8CI96"/>
    </source>
</evidence>
<evidence type="ECO:0000255" key="3">
    <source>
        <dbReference type="PROSITE-ProRule" id="PRU00045"/>
    </source>
</evidence>
<evidence type="ECO:0000256" key="4">
    <source>
        <dbReference type="SAM" id="MobiDB-lite"/>
    </source>
</evidence>
<evidence type="ECO:0000303" key="5">
    <source>
    </source>
</evidence>
<evidence type="ECO:0000303" key="6">
    <source>
    </source>
</evidence>
<evidence type="ECO:0000303" key="7">
    <source ref="1"/>
</evidence>
<evidence type="ECO:0000305" key="8"/>
<evidence type="ECO:0007829" key="9">
    <source>
        <dbReference type="PDB" id="2Z0W"/>
    </source>
</evidence>
<protein>
    <recommendedName>
        <fullName>CAP-Gly domain-containing linker protein 4</fullName>
    </recommendedName>
    <alternativeName>
        <fullName>Restin-like protein 2</fullName>
    </alternativeName>
</protein>
<comment type="interaction">
    <interactant intactId="EBI-5655540">
        <id>Q8N3C7</id>
    </interactant>
    <interactant intactId="EBI-7116203">
        <id>O75031</id>
        <label>HSF2BP</label>
    </interactant>
    <organismsDiffer>false</organismsDiffer>
    <experiments>3</experiments>
</comment>
<comment type="interaction">
    <interactant intactId="EBI-5655540">
        <id>Q8N3C7</id>
    </interactant>
    <interactant intactId="EBI-752007">
        <id>Q96AA8</id>
        <label>JAKMIP2</label>
    </interactant>
    <organismsDiffer>false</organismsDiffer>
    <experiments>7</experiments>
</comment>
<comment type="interaction">
    <interactant intactId="EBI-5655540">
        <id>Q8N3C7</id>
    </interactant>
    <interactant intactId="EBI-2125614">
        <id>Q9BVG8</id>
        <label>KIFC3</label>
    </interactant>
    <organismsDiffer>false</organismsDiffer>
    <experiments>3</experiments>
</comment>
<comment type="interaction">
    <interactant intactId="EBI-5655540">
        <id>Q8N3C7</id>
    </interactant>
    <interactant intactId="EBI-14069005">
        <id>Q9BVG8-5</id>
        <label>KIFC3</label>
    </interactant>
    <organismsDiffer>false</organismsDiffer>
    <experiments>3</experiments>
</comment>
<comment type="interaction">
    <interactant intactId="EBI-5655540">
        <id>Q8N3C7</id>
    </interactant>
    <interactant intactId="EBI-741037">
        <id>Q9BRK4</id>
        <label>LZTS2</label>
    </interactant>
    <organismsDiffer>false</organismsDiffer>
    <experiments>3</experiments>
</comment>
<comment type="interaction">
    <interactant intactId="EBI-5655540">
        <id>Q8N3C7</id>
    </interactant>
    <interactant intactId="EBI-749530">
        <id>P43365</id>
        <label>MAGEA12</label>
    </interactant>
    <organismsDiffer>false</organismsDiffer>
    <experiments>6</experiments>
</comment>
<comment type="interaction">
    <interactant intactId="EBI-5655540">
        <id>Q8N3C7</id>
    </interactant>
    <interactant intactId="EBI-2211064">
        <id>Q14244</id>
        <label>MAP7</label>
    </interactant>
    <organismsDiffer>false</organismsDiffer>
    <experiments>3</experiments>
</comment>
<comment type="interaction">
    <interactant intactId="EBI-5655540">
        <id>Q8N3C7</id>
    </interactant>
    <interactant intactId="EBI-16439278">
        <id>Q6FHY5</id>
        <label>MEOX2</label>
    </interactant>
    <organismsDiffer>false</organismsDiffer>
    <experiments>3</experiments>
</comment>
<comment type="interaction">
    <interactant intactId="EBI-5655540">
        <id>Q8N3C7</id>
    </interactant>
    <interactant intactId="EBI-12695166">
        <id>Q9NPC8</id>
        <label>SIX2</label>
    </interactant>
    <organismsDiffer>false</organismsDiffer>
    <experiments>3</experiments>
</comment>
<comment type="interaction">
    <interactant intactId="EBI-5655540">
        <id>Q8N3C7</id>
    </interactant>
    <interactant intactId="EBI-742790">
        <id>Q13049</id>
        <label>TRIM32</label>
    </interactant>
    <organismsDiffer>false</organismsDiffer>
    <experiments>6</experiments>
</comment>
<comment type="interaction">
    <interactant intactId="EBI-5655540">
        <id>Q8N3C7</id>
    </interactant>
    <interactant intactId="EBI-358993">
        <id>Q15645</id>
        <label>TRIP13</label>
    </interactant>
    <organismsDiffer>false</organismsDiffer>
    <experiments>3</experiments>
</comment>
<comment type="interaction">
    <interactant intactId="EBI-5655540">
        <id>Q8N3C7</id>
    </interactant>
    <interactant intactId="EBI-10265237">
        <id>Q8NC26</id>
        <label>ZNF114</label>
    </interactant>
    <organismsDiffer>false</organismsDiffer>
    <experiments>7</experiments>
</comment>
<comment type="interaction">
    <interactant intactId="EBI-5655540">
        <id>Q8N3C7</id>
    </interactant>
    <interactant intactId="EBI-25475888">
        <id>PRO_0000449630</id>
        <label>rep</label>
        <dbReference type="UniProtKB" id="P0DTD1"/>
    </interactant>
    <organismsDiffer>true</organismsDiffer>
    <experiments>3</experiments>
</comment>
<comment type="alternative products">
    <event type="alternative splicing"/>
    <isoform>
        <id>Q8N3C7-1</id>
        <name>1</name>
        <sequence type="displayed"/>
    </isoform>
    <isoform>
        <id>Q8N3C7-2</id>
        <name>2</name>
        <sequence type="described" ref="VSP_012971 VSP_012972"/>
    </isoform>
    <isoform>
        <id>Q8N3C7-3</id>
        <name>3</name>
        <sequence type="described" ref="VSP_012972"/>
    </isoform>
    <isoform>
        <id>Q8N3C7-4</id>
        <name>4</name>
        <sequence type="described" ref="VSP_012969 VSP_012970"/>
    </isoform>
</comment>
<comment type="sequence caution" evidence="8">
    <conflict type="erroneous initiation">
        <sequence resource="EMBL-CDS" id="BAB14974"/>
    </conflict>
</comment>
<dbReference type="EMBL" id="AF433661">
    <property type="protein sequence ID" value="AAP97312.1"/>
    <property type="molecule type" value="mRNA"/>
</dbReference>
<dbReference type="EMBL" id="AK024722">
    <property type="protein sequence ID" value="BAB14974.1"/>
    <property type="status" value="ALT_INIT"/>
    <property type="molecule type" value="mRNA"/>
</dbReference>
<dbReference type="EMBL" id="AK057267">
    <property type="protein sequence ID" value="BAB71403.1"/>
    <property type="molecule type" value="mRNA"/>
</dbReference>
<dbReference type="EMBL" id="AK302325">
    <property type="protein sequence ID" value="BAH13674.1"/>
    <property type="molecule type" value="mRNA"/>
</dbReference>
<dbReference type="EMBL" id="AL834443">
    <property type="protein sequence ID" value="CAD39103.1"/>
    <property type="molecule type" value="mRNA"/>
</dbReference>
<dbReference type="EMBL" id="CH471053">
    <property type="protein sequence ID" value="EAX00510.1"/>
    <property type="molecule type" value="Genomic_DNA"/>
</dbReference>
<dbReference type="EMBL" id="BC015310">
    <property type="protein sequence ID" value="AAH15310.2"/>
    <property type="molecule type" value="mRNA"/>
</dbReference>
<dbReference type="EMBL" id="BC126167">
    <property type="protein sequence ID" value="AAI26168.1"/>
    <property type="molecule type" value="mRNA"/>
</dbReference>
<dbReference type="EMBL" id="BC136331">
    <property type="protein sequence ID" value="AAI36332.1"/>
    <property type="molecule type" value="mRNA"/>
</dbReference>
<dbReference type="CCDS" id="CCDS1770.1">
    <molecule id="Q8N3C7-1"/>
</dbReference>
<dbReference type="CCDS" id="CCDS74502.1">
    <molecule id="Q8N3C7-3"/>
</dbReference>
<dbReference type="RefSeq" id="NP_001274456.1">
    <molecule id="Q8N3C7-1"/>
    <property type="nucleotide sequence ID" value="NM_001287527.2"/>
</dbReference>
<dbReference type="RefSeq" id="NP_001274457.1">
    <molecule id="Q8N3C7-3"/>
    <property type="nucleotide sequence ID" value="NM_001287528.2"/>
</dbReference>
<dbReference type="RefSeq" id="NP_078968.3">
    <molecule id="Q8N3C7-1"/>
    <property type="nucleotide sequence ID" value="NM_024692.5"/>
</dbReference>
<dbReference type="RefSeq" id="XP_005264619.1">
    <molecule id="Q8N3C7-1"/>
    <property type="nucleotide sequence ID" value="XM_005264562.3"/>
</dbReference>
<dbReference type="RefSeq" id="XP_005264620.1">
    <molecule id="Q8N3C7-1"/>
    <property type="nucleotide sequence ID" value="XM_005264563.2"/>
</dbReference>
<dbReference type="RefSeq" id="XP_006712167.1">
    <molecule id="Q8N3C7-1"/>
    <property type="nucleotide sequence ID" value="XM_006712104.3"/>
</dbReference>
<dbReference type="RefSeq" id="XP_011531411.1">
    <molecule id="Q8N3C7-1"/>
    <property type="nucleotide sequence ID" value="XM_011533109.2"/>
</dbReference>
<dbReference type="RefSeq" id="XP_016860447.1">
    <molecule id="Q8N3C7-1"/>
    <property type="nucleotide sequence ID" value="XM_017004958.2"/>
</dbReference>
<dbReference type="RefSeq" id="XP_047301804.1">
    <molecule id="Q8N3C7-1"/>
    <property type="nucleotide sequence ID" value="XM_047445848.1"/>
</dbReference>
<dbReference type="RefSeq" id="XP_054199921.1">
    <molecule id="Q8N3C7-1"/>
    <property type="nucleotide sequence ID" value="XM_054343946.1"/>
</dbReference>
<dbReference type="RefSeq" id="XP_054199922.1">
    <molecule id="Q8N3C7-1"/>
    <property type="nucleotide sequence ID" value="XM_054343947.1"/>
</dbReference>
<dbReference type="RefSeq" id="XP_054199923.1">
    <molecule id="Q8N3C7-1"/>
    <property type="nucleotide sequence ID" value="XM_054343948.1"/>
</dbReference>
<dbReference type="RefSeq" id="XP_054199924.1">
    <molecule id="Q8N3C7-1"/>
    <property type="nucleotide sequence ID" value="XM_054343949.1"/>
</dbReference>
<dbReference type="RefSeq" id="XP_054199925.1">
    <molecule id="Q8N3C7-1"/>
    <property type="nucleotide sequence ID" value="XM_054343950.1"/>
</dbReference>
<dbReference type="RefSeq" id="XP_054199926.1">
    <molecule id="Q8N3C7-1"/>
    <property type="nucleotide sequence ID" value="XM_054343951.1"/>
</dbReference>
<dbReference type="PDB" id="2Z0W">
    <property type="method" value="X-ray"/>
    <property type="resolution" value="2.50 A"/>
    <property type="chains" value="A=482-564"/>
</dbReference>
<dbReference type="PDBsum" id="2Z0W"/>
<dbReference type="SMR" id="Q8N3C7"/>
<dbReference type="BioGRID" id="122857">
    <property type="interactions" value="50"/>
</dbReference>
<dbReference type="FunCoup" id="Q8N3C7">
    <property type="interactions" value="1424"/>
</dbReference>
<dbReference type="IntAct" id="Q8N3C7">
    <property type="interactions" value="43"/>
</dbReference>
<dbReference type="MINT" id="Q8N3C7"/>
<dbReference type="STRING" id="9606.ENSP00000327009"/>
<dbReference type="GlyGen" id="Q8N3C7">
    <property type="glycosylation" value="2 sites, 1 O-linked glycan (1 site)"/>
</dbReference>
<dbReference type="iPTMnet" id="Q8N3C7"/>
<dbReference type="PhosphoSitePlus" id="Q8N3C7"/>
<dbReference type="BioMuta" id="CLIP4"/>
<dbReference type="DMDM" id="60390950"/>
<dbReference type="jPOST" id="Q8N3C7"/>
<dbReference type="MassIVE" id="Q8N3C7"/>
<dbReference type="PaxDb" id="9606-ENSP00000327009"/>
<dbReference type="PeptideAtlas" id="Q8N3C7"/>
<dbReference type="ProteomicsDB" id="71789">
    <molecule id="Q8N3C7-1"/>
</dbReference>
<dbReference type="ProteomicsDB" id="71790">
    <molecule id="Q8N3C7-2"/>
</dbReference>
<dbReference type="ProteomicsDB" id="71791">
    <molecule id="Q8N3C7-3"/>
</dbReference>
<dbReference type="ProteomicsDB" id="71792">
    <molecule id="Q8N3C7-4"/>
</dbReference>
<dbReference type="Pumba" id="Q8N3C7"/>
<dbReference type="TopDownProteomics" id="Q8N3C7-4">
    <molecule id="Q8N3C7-4"/>
</dbReference>
<dbReference type="Antibodypedia" id="51158">
    <property type="antibodies" value="127 antibodies from 24 providers"/>
</dbReference>
<dbReference type="DNASU" id="79745"/>
<dbReference type="Ensembl" id="ENST00000320081.10">
    <molecule id="Q8N3C7-1"/>
    <property type="protein sequence ID" value="ENSP00000327009.5"/>
    <property type="gene ID" value="ENSG00000115295.21"/>
</dbReference>
<dbReference type="Ensembl" id="ENST00000401605.5">
    <molecule id="Q8N3C7-3"/>
    <property type="protein sequence ID" value="ENSP00000384242.1"/>
    <property type="gene ID" value="ENSG00000115295.21"/>
</dbReference>
<dbReference type="Ensembl" id="ENST00000404424.5">
    <molecule id="Q8N3C7-1"/>
    <property type="protein sequence ID" value="ENSP00000385594.1"/>
    <property type="gene ID" value="ENSG00000115295.21"/>
</dbReference>
<dbReference type="Ensembl" id="ENST00000690063.1">
    <molecule id="Q8N3C7-1"/>
    <property type="protein sequence ID" value="ENSP00000508552.1"/>
    <property type="gene ID" value="ENSG00000115295.21"/>
</dbReference>
<dbReference type="Ensembl" id="ENST00000693264.1">
    <molecule id="Q8N3C7-1"/>
    <property type="protein sequence ID" value="ENSP00000509159.1"/>
    <property type="gene ID" value="ENSG00000115295.21"/>
</dbReference>
<dbReference type="GeneID" id="79745"/>
<dbReference type="KEGG" id="hsa:79745"/>
<dbReference type="MANE-Select" id="ENST00000320081.10">
    <property type="protein sequence ID" value="ENSP00000327009.5"/>
    <property type="RefSeq nucleotide sequence ID" value="NM_024692.6"/>
    <property type="RefSeq protein sequence ID" value="NP_078968.3"/>
</dbReference>
<dbReference type="UCSC" id="uc002rmu.5">
    <molecule id="Q8N3C7-1"/>
    <property type="organism name" value="human"/>
</dbReference>
<dbReference type="AGR" id="HGNC:26108"/>
<dbReference type="CTD" id="79745"/>
<dbReference type="DisGeNET" id="79745"/>
<dbReference type="GeneCards" id="CLIP4"/>
<dbReference type="HGNC" id="HGNC:26108">
    <property type="gene designation" value="CLIP4"/>
</dbReference>
<dbReference type="HPA" id="ENSG00000115295">
    <property type="expression patterns" value="Tissue enhanced (skeletal)"/>
</dbReference>
<dbReference type="neXtProt" id="NX_Q8N3C7"/>
<dbReference type="OpenTargets" id="ENSG00000115295"/>
<dbReference type="PharmGKB" id="PA162382440"/>
<dbReference type="VEuPathDB" id="HostDB:ENSG00000115295"/>
<dbReference type="eggNOG" id="KOG0241">
    <property type="taxonomic scope" value="Eukaryota"/>
</dbReference>
<dbReference type="eggNOG" id="KOG4568">
    <property type="taxonomic scope" value="Eukaryota"/>
</dbReference>
<dbReference type="GeneTree" id="ENSGT00940000157706"/>
<dbReference type="HOGENOM" id="CLU_023687_1_0_1"/>
<dbReference type="InParanoid" id="Q8N3C7"/>
<dbReference type="OMA" id="CIMFLYF"/>
<dbReference type="OrthoDB" id="2130750at2759"/>
<dbReference type="PAN-GO" id="Q8N3C7">
    <property type="GO annotations" value="5 GO annotations based on evolutionary models"/>
</dbReference>
<dbReference type="PhylomeDB" id="Q8N3C7"/>
<dbReference type="TreeFam" id="TF326096"/>
<dbReference type="PathwayCommons" id="Q8N3C7"/>
<dbReference type="SignaLink" id="Q8N3C7"/>
<dbReference type="BioGRID-ORCS" id="79745">
    <property type="hits" value="6 hits in 1150 CRISPR screens"/>
</dbReference>
<dbReference type="ChiTaRS" id="CLIP4">
    <property type="organism name" value="human"/>
</dbReference>
<dbReference type="EvolutionaryTrace" id="Q8N3C7"/>
<dbReference type="GenomeRNAi" id="79745"/>
<dbReference type="Pharos" id="Q8N3C7">
    <property type="development level" value="Tdark"/>
</dbReference>
<dbReference type="PRO" id="PR:Q8N3C7"/>
<dbReference type="Proteomes" id="UP000005640">
    <property type="component" value="Chromosome 2"/>
</dbReference>
<dbReference type="RNAct" id="Q8N3C7">
    <property type="molecule type" value="protein"/>
</dbReference>
<dbReference type="Bgee" id="ENSG00000115295">
    <property type="expression patterns" value="Expressed in secondary oocyte and 183 other cell types or tissues"/>
</dbReference>
<dbReference type="ExpressionAtlas" id="Q8N3C7">
    <property type="expression patterns" value="baseline and differential"/>
</dbReference>
<dbReference type="GO" id="GO:0005938">
    <property type="term" value="C:cell cortex"/>
    <property type="evidence" value="ECO:0000318"/>
    <property type="project" value="GO_Central"/>
</dbReference>
<dbReference type="GO" id="GO:0043231">
    <property type="term" value="C:intracellular membrane-bounded organelle"/>
    <property type="evidence" value="ECO:0000314"/>
    <property type="project" value="HPA"/>
</dbReference>
<dbReference type="GO" id="GO:0035371">
    <property type="term" value="C:microtubule plus-end"/>
    <property type="evidence" value="ECO:0000318"/>
    <property type="project" value="GO_Central"/>
</dbReference>
<dbReference type="GO" id="GO:0005634">
    <property type="term" value="C:nucleus"/>
    <property type="evidence" value="ECO:0000318"/>
    <property type="project" value="GO_Central"/>
</dbReference>
<dbReference type="GO" id="GO:0051010">
    <property type="term" value="F:microtubule plus-end binding"/>
    <property type="evidence" value="ECO:0000318"/>
    <property type="project" value="GO_Central"/>
</dbReference>
<dbReference type="GO" id="GO:0031122">
    <property type="term" value="P:cytoplasmic microtubule organization"/>
    <property type="evidence" value="ECO:0000318"/>
    <property type="project" value="GO_Central"/>
</dbReference>
<dbReference type="FunFam" id="1.25.40.20:FF:000044">
    <property type="entry name" value="CAP-Gly domain containing linker protein 3"/>
    <property type="match status" value="1"/>
</dbReference>
<dbReference type="FunFam" id="2.30.30.190:FF:000005">
    <property type="entry name" value="CAP-Gly domain containing linker protein 3"/>
    <property type="match status" value="2"/>
</dbReference>
<dbReference type="FunFam" id="2.30.30.190:FF:000012">
    <property type="entry name" value="CAP-Gly domain-containing linker protein 4 isoform X1"/>
    <property type="match status" value="1"/>
</dbReference>
<dbReference type="Gene3D" id="1.25.40.20">
    <property type="entry name" value="Ankyrin repeat-containing domain"/>
    <property type="match status" value="1"/>
</dbReference>
<dbReference type="Gene3D" id="2.30.30.190">
    <property type="entry name" value="CAP Gly-rich-like domain"/>
    <property type="match status" value="3"/>
</dbReference>
<dbReference type="InterPro" id="IPR002110">
    <property type="entry name" value="Ankyrin_rpt"/>
</dbReference>
<dbReference type="InterPro" id="IPR036770">
    <property type="entry name" value="Ankyrin_rpt-contain_sf"/>
</dbReference>
<dbReference type="InterPro" id="IPR036859">
    <property type="entry name" value="CAP-Gly_dom_sf"/>
</dbReference>
<dbReference type="InterPro" id="IPR000938">
    <property type="entry name" value="CAP-Gly_domain"/>
</dbReference>
<dbReference type="PANTHER" id="PTHR18916:SF89">
    <property type="entry name" value="CAP-GLY DOMAIN-CONTAINING PROTEIN"/>
    <property type="match status" value="1"/>
</dbReference>
<dbReference type="PANTHER" id="PTHR18916">
    <property type="entry name" value="DYNACTIN 1-RELATED MICROTUBULE-BINDING"/>
    <property type="match status" value="1"/>
</dbReference>
<dbReference type="Pfam" id="PF12796">
    <property type="entry name" value="Ank_2"/>
    <property type="match status" value="1"/>
</dbReference>
<dbReference type="Pfam" id="PF01302">
    <property type="entry name" value="CAP_GLY"/>
    <property type="match status" value="3"/>
</dbReference>
<dbReference type="SMART" id="SM00248">
    <property type="entry name" value="ANK"/>
    <property type="match status" value="3"/>
</dbReference>
<dbReference type="SMART" id="SM01052">
    <property type="entry name" value="CAP_GLY"/>
    <property type="match status" value="3"/>
</dbReference>
<dbReference type="SUPFAM" id="SSF48403">
    <property type="entry name" value="Ankyrin repeat"/>
    <property type="match status" value="1"/>
</dbReference>
<dbReference type="SUPFAM" id="SSF74924">
    <property type="entry name" value="Cap-Gly domain"/>
    <property type="match status" value="3"/>
</dbReference>
<dbReference type="PROSITE" id="PS50297">
    <property type="entry name" value="ANK_REP_REGION"/>
    <property type="match status" value="1"/>
</dbReference>
<dbReference type="PROSITE" id="PS50088">
    <property type="entry name" value="ANK_REPEAT"/>
    <property type="match status" value="1"/>
</dbReference>
<dbReference type="PROSITE" id="PS00845">
    <property type="entry name" value="CAP_GLY_1"/>
    <property type="match status" value="2"/>
</dbReference>
<dbReference type="PROSITE" id="PS50245">
    <property type="entry name" value="CAP_GLY_2"/>
    <property type="match status" value="3"/>
</dbReference>
<accession>Q8N3C7</accession>
<accession>A0AV10</accession>
<accession>B2RMQ3</accession>
<accession>B7Z7N8</accession>
<accession>Q7Z4U3</accession>
<accession>Q96BR7</accession>
<accession>Q96MA5</accession>
<accession>Q9H7C0</accession>
<name>CLIP4_HUMAN</name>
<feature type="chain" id="PRO_0000083529" description="CAP-Gly domain-containing linker protein 4">
    <location>
        <begin position="1"/>
        <end position="705"/>
    </location>
</feature>
<feature type="repeat" description="ANK 1">
    <location>
        <begin position="65"/>
        <end position="101"/>
    </location>
</feature>
<feature type="repeat" description="ANK 2">
    <location>
        <begin position="149"/>
        <end position="180"/>
    </location>
</feature>
<feature type="repeat" description="ANK 3">
    <location>
        <begin position="186"/>
        <end position="215"/>
    </location>
</feature>
<feature type="domain" description="CAP-Gly 1" evidence="3">
    <location>
        <begin position="303"/>
        <end position="345"/>
    </location>
</feature>
<feature type="domain" description="CAP-Gly 2" evidence="3">
    <location>
        <begin position="505"/>
        <end position="547"/>
    </location>
</feature>
<feature type="domain" description="CAP-Gly 3" evidence="3">
    <location>
        <begin position="644"/>
        <end position="686"/>
    </location>
</feature>
<feature type="region of interest" description="Disordered" evidence="4">
    <location>
        <begin position="391"/>
        <end position="410"/>
    </location>
</feature>
<feature type="region of interest" description="Disordered" evidence="4">
    <location>
        <begin position="431"/>
        <end position="479"/>
    </location>
</feature>
<feature type="compositionally biased region" description="Polar residues" evidence="4">
    <location>
        <begin position="441"/>
        <end position="452"/>
    </location>
</feature>
<feature type="compositionally biased region" description="Low complexity" evidence="4">
    <location>
        <begin position="455"/>
        <end position="479"/>
    </location>
</feature>
<feature type="modified residue" description="Phosphoserine" evidence="1">
    <location>
        <position position="557"/>
    </location>
</feature>
<feature type="modified residue" description="Phosphoserine" evidence="2">
    <location>
        <position position="609"/>
    </location>
</feature>
<feature type="splice variant" id="VSP_012969" description="In isoform 4." evidence="5">
    <location>
        <begin position="1"/>
        <end position="150"/>
    </location>
</feature>
<feature type="splice variant" id="VSP_012970" description="In isoform 4." evidence="5">
    <original>LNSSATSTANNSRCEGELRLGERVLVVGQRLGTIRFFGTTNFAPGYWYGIELEKPHGKNDGSVGGVQYFSCSPRYGIFAPPSRVQRVTDSLDTLSEISSNKQNHSYPGFRRSFSTTSASSQKEINRRNAFSKSKAALRRSWSSTPTAGGIEGSVKLHEGSQVLLTSSNEMGTVRYVGPTDFASGIWLGLELRSAKGKNDGSVGDKRYFTCKPNHGVLVRPSRVTYRGINGSKLVDENC</original>
    <variation>IYGFFNQAFLVFFILVCLFEFLSNIYSK</variation>
    <location>
        <begin position="468"/>
        <end position="705"/>
    </location>
</feature>
<feature type="splice variant" id="VSP_012971" description="In isoform 2." evidence="6 7">
    <original>P</original>
    <variation>PVL</variation>
    <location>
        <position position="511"/>
    </location>
</feature>
<feature type="splice variant" id="VSP_012972" description="In isoform 2 and isoform 3." evidence="5 6 7">
    <location>
        <begin position="600"/>
        <end position="705"/>
    </location>
</feature>
<feature type="sequence variant" id="VAR_048675" description="In dbSNP:rs3100246.">
    <original>R</original>
    <variation>L</variation>
    <location>
        <position position="486"/>
    </location>
</feature>
<feature type="sequence variant" id="VAR_048676" description="In dbSNP:rs34327508.">
    <original>T</original>
    <variation>P</variation>
    <location>
        <position position="613"/>
    </location>
</feature>
<feature type="sequence conflict" description="In Ref. 2; BAB14974." evidence="8" ref="2">
    <original>E</original>
    <variation>G</variation>
    <location>
        <position position="321"/>
    </location>
</feature>
<feature type="strand" evidence="9">
    <location>
        <begin position="499"/>
        <end position="505"/>
    </location>
</feature>
<feature type="strand" evidence="9">
    <location>
        <begin position="508"/>
        <end position="512"/>
    </location>
</feature>
<feature type="strand" evidence="9">
    <location>
        <begin position="514"/>
        <end position="522"/>
    </location>
</feature>
<feature type="strand" evidence="9">
    <location>
        <begin position="524"/>
        <end position="530"/>
    </location>
</feature>
<feature type="strand" evidence="9">
    <location>
        <begin position="533"/>
        <end position="536"/>
    </location>
</feature>
<feature type="strand" evidence="9">
    <location>
        <begin position="542"/>
        <end position="546"/>
    </location>
</feature>
<feature type="helix" evidence="9">
    <location>
        <begin position="548"/>
        <end position="550"/>
    </location>
</feature>
<sequence length="705" mass="76317">MTIEDLPDFPLEGNPLFGRYPFIFSASDTPVIFSISAAPMPSDCEFSFFDPNDASCQEILFDPKTSVSELFAILRQWVPQVQQNIDIIGNEILKRGCNVNDRDGLTDMTLLHYTCKSGAHGIGDVETAVKFATQLIDLGADISLRSRWTNMNALHYAAYFDVPELIRVILKTSKPKDVDATCSDFNFGTALHIAAYNLCAGAVKCLLEQGANPAFRNDKGQIPADVVPDPVDMPLEMADAAATAKEIKQMLLDAVPLSCNISKAMLPNYDHVTGKAMLTSLGLKLGDRVVIAGQKVGTLRFCGTTEFASGQWAGIELDEPEGKNNGSVGKVQYFKCAPKYGIFAPLSKISKAKGRRKNITHTPSTKAAVPLIRSQKIDVAHVTSKVNTGLMTSKKDSASESTLSLPPGEELKTVTEKDVALLGSVSSCSSTSSLEHRQSYPKKQNAISSNKKTMSKSPSLSSRASAGLNSSATSTANNSRCEGELRLGERVLVVGQRLGTIRFFGTTNFAPGYWYGIELEKPHGKNDGSVGGVQYFSCSPRYGIFAPPSRVQRVTDSLDTLSEISSNKQNHSYPGFRRSFSTTSASSQKEINRRNAFSKSKAALRRSWSSTPTAGGIEGSVKLHEGSQVLLTSSNEMGTVRYVGPTDFASGIWLGLELRSAKGKNDGSVGDKRYFTCKPNHGVLVRPSRVTYRGINGSKLVDENC</sequence>
<gene>
    <name type="primary">CLIP4</name>
    <name type="synonym">RSNL2</name>
</gene>
<organism>
    <name type="scientific">Homo sapiens</name>
    <name type="common">Human</name>
    <dbReference type="NCBI Taxonomy" id="9606"/>
    <lineage>
        <taxon>Eukaryota</taxon>
        <taxon>Metazoa</taxon>
        <taxon>Chordata</taxon>
        <taxon>Craniata</taxon>
        <taxon>Vertebrata</taxon>
        <taxon>Euteleostomi</taxon>
        <taxon>Mammalia</taxon>
        <taxon>Eutheria</taxon>
        <taxon>Euarchontoglires</taxon>
        <taxon>Primates</taxon>
        <taxon>Haplorrhini</taxon>
        <taxon>Catarrhini</taxon>
        <taxon>Hominidae</taxon>
        <taxon>Homo</taxon>
    </lineage>
</organism>
<keyword id="KW-0002">3D-structure</keyword>
<keyword id="KW-0025">Alternative splicing</keyword>
<keyword id="KW-0040">ANK repeat</keyword>
<keyword id="KW-0597">Phosphoprotein</keyword>
<keyword id="KW-1267">Proteomics identification</keyword>
<keyword id="KW-1185">Reference proteome</keyword>
<keyword id="KW-0677">Repeat</keyword>
<reference key="1">
    <citation type="submission" date="2001-10" db="EMBL/GenBank/DDBJ databases">
        <authorList>
            <person name="Guo J.H."/>
            <person name="Yu L."/>
        </authorList>
    </citation>
    <scope>NUCLEOTIDE SEQUENCE [LARGE SCALE MRNA] (ISOFORM 2)</scope>
</reference>
<reference key="2">
    <citation type="journal article" date="2004" name="Nat. Genet.">
        <title>Complete sequencing and characterization of 21,243 full-length human cDNAs.</title>
        <authorList>
            <person name="Ota T."/>
            <person name="Suzuki Y."/>
            <person name="Nishikawa T."/>
            <person name="Otsuki T."/>
            <person name="Sugiyama T."/>
            <person name="Irie R."/>
            <person name="Wakamatsu A."/>
            <person name="Hayashi K."/>
            <person name="Sato H."/>
            <person name="Nagai K."/>
            <person name="Kimura K."/>
            <person name="Makita H."/>
            <person name="Sekine M."/>
            <person name="Obayashi M."/>
            <person name="Nishi T."/>
            <person name="Shibahara T."/>
            <person name="Tanaka T."/>
            <person name="Ishii S."/>
            <person name="Yamamoto J."/>
            <person name="Saito K."/>
            <person name="Kawai Y."/>
            <person name="Isono Y."/>
            <person name="Nakamura Y."/>
            <person name="Nagahari K."/>
            <person name="Murakami K."/>
            <person name="Yasuda T."/>
            <person name="Iwayanagi T."/>
            <person name="Wagatsuma M."/>
            <person name="Shiratori A."/>
            <person name="Sudo H."/>
            <person name="Hosoiri T."/>
            <person name="Kaku Y."/>
            <person name="Kodaira H."/>
            <person name="Kondo H."/>
            <person name="Sugawara M."/>
            <person name="Takahashi M."/>
            <person name="Kanda K."/>
            <person name="Yokoi T."/>
            <person name="Furuya T."/>
            <person name="Kikkawa E."/>
            <person name="Omura Y."/>
            <person name="Abe K."/>
            <person name="Kamihara K."/>
            <person name="Katsuta N."/>
            <person name="Sato K."/>
            <person name="Tanikawa M."/>
            <person name="Yamazaki M."/>
            <person name="Ninomiya K."/>
            <person name="Ishibashi T."/>
            <person name="Yamashita H."/>
            <person name="Murakawa K."/>
            <person name="Fujimori K."/>
            <person name="Tanai H."/>
            <person name="Kimata M."/>
            <person name="Watanabe M."/>
            <person name="Hiraoka S."/>
            <person name="Chiba Y."/>
            <person name="Ishida S."/>
            <person name="Ono Y."/>
            <person name="Takiguchi S."/>
            <person name="Watanabe S."/>
            <person name="Yosida M."/>
            <person name="Hotuta T."/>
            <person name="Kusano J."/>
            <person name="Kanehori K."/>
            <person name="Takahashi-Fujii A."/>
            <person name="Hara H."/>
            <person name="Tanase T.-O."/>
            <person name="Nomura Y."/>
            <person name="Togiya S."/>
            <person name="Komai F."/>
            <person name="Hara R."/>
            <person name="Takeuchi K."/>
            <person name="Arita M."/>
            <person name="Imose N."/>
            <person name="Musashino K."/>
            <person name="Yuuki H."/>
            <person name="Oshima A."/>
            <person name="Sasaki N."/>
            <person name="Aotsuka S."/>
            <person name="Yoshikawa Y."/>
            <person name="Matsunawa H."/>
            <person name="Ichihara T."/>
            <person name="Shiohata N."/>
            <person name="Sano S."/>
            <person name="Moriya S."/>
            <person name="Momiyama H."/>
            <person name="Satoh N."/>
            <person name="Takami S."/>
            <person name="Terashima Y."/>
            <person name="Suzuki O."/>
            <person name="Nakagawa S."/>
            <person name="Senoh A."/>
            <person name="Mizoguchi H."/>
            <person name="Goto Y."/>
            <person name="Shimizu F."/>
            <person name="Wakebe H."/>
            <person name="Hishigaki H."/>
            <person name="Watanabe T."/>
            <person name="Sugiyama A."/>
            <person name="Takemoto M."/>
            <person name="Kawakami B."/>
            <person name="Yamazaki M."/>
            <person name="Watanabe K."/>
            <person name="Kumagai A."/>
            <person name="Itakura S."/>
            <person name="Fukuzumi Y."/>
            <person name="Fujimori Y."/>
            <person name="Komiyama M."/>
            <person name="Tashiro H."/>
            <person name="Tanigami A."/>
            <person name="Fujiwara T."/>
            <person name="Ono T."/>
            <person name="Yamada K."/>
            <person name="Fujii Y."/>
            <person name="Ozaki K."/>
            <person name="Hirao M."/>
            <person name="Ohmori Y."/>
            <person name="Kawabata A."/>
            <person name="Hikiji T."/>
            <person name="Kobatake N."/>
            <person name="Inagaki H."/>
            <person name="Ikema Y."/>
            <person name="Okamoto S."/>
            <person name="Okitani R."/>
            <person name="Kawakami T."/>
            <person name="Noguchi S."/>
            <person name="Itoh T."/>
            <person name="Shigeta K."/>
            <person name="Senba T."/>
            <person name="Matsumura K."/>
            <person name="Nakajima Y."/>
            <person name="Mizuno T."/>
            <person name="Morinaga M."/>
            <person name="Sasaki M."/>
            <person name="Togashi T."/>
            <person name="Oyama M."/>
            <person name="Hata H."/>
            <person name="Watanabe M."/>
            <person name="Komatsu T."/>
            <person name="Mizushima-Sugano J."/>
            <person name="Satoh T."/>
            <person name="Shirai Y."/>
            <person name="Takahashi Y."/>
            <person name="Nakagawa K."/>
            <person name="Okumura K."/>
            <person name="Nagase T."/>
            <person name="Nomura N."/>
            <person name="Kikuchi H."/>
            <person name="Masuho Y."/>
            <person name="Yamashita R."/>
            <person name="Nakai K."/>
            <person name="Yada T."/>
            <person name="Nakamura Y."/>
            <person name="Ohara O."/>
            <person name="Isogai T."/>
            <person name="Sugano S."/>
        </authorList>
    </citation>
    <scope>NUCLEOTIDE SEQUENCE [LARGE SCALE MRNA] (ISOFORM 3)</scope>
    <scope>NUCLEOTIDE SEQUENCE [LARGE SCALE MRNA] OF 102-705 (ISOFORMS 3 AND 4)</scope>
    <source>
        <tissue>Testis</tissue>
    </source>
</reference>
<reference key="3">
    <citation type="journal article" date="2007" name="BMC Genomics">
        <title>The full-ORF clone resource of the German cDNA consortium.</title>
        <authorList>
            <person name="Bechtel S."/>
            <person name="Rosenfelder H."/>
            <person name="Duda A."/>
            <person name="Schmidt C.P."/>
            <person name="Ernst U."/>
            <person name="Wellenreuther R."/>
            <person name="Mehrle A."/>
            <person name="Schuster C."/>
            <person name="Bahr A."/>
            <person name="Bloecker H."/>
            <person name="Heubner D."/>
            <person name="Hoerlein A."/>
            <person name="Michel G."/>
            <person name="Wedler H."/>
            <person name="Koehrer K."/>
            <person name="Ottenwaelder B."/>
            <person name="Poustka A."/>
            <person name="Wiemann S."/>
            <person name="Schupp I."/>
        </authorList>
    </citation>
    <scope>NUCLEOTIDE SEQUENCE [LARGE SCALE MRNA] (ISOFORM 1)</scope>
    <source>
        <tissue>Amygdala</tissue>
    </source>
</reference>
<reference key="4">
    <citation type="submission" date="2005-09" db="EMBL/GenBank/DDBJ databases">
        <authorList>
            <person name="Mural R.J."/>
            <person name="Istrail S."/>
            <person name="Sutton G.G."/>
            <person name="Florea L."/>
            <person name="Halpern A.L."/>
            <person name="Mobarry C.M."/>
            <person name="Lippert R."/>
            <person name="Walenz B."/>
            <person name="Shatkay H."/>
            <person name="Dew I."/>
            <person name="Miller J.R."/>
            <person name="Flanigan M.J."/>
            <person name="Edwards N.J."/>
            <person name="Bolanos R."/>
            <person name="Fasulo D."/>
            <person name="Halldorsson B.V."/>
            <person name="Hannenhalli S."/>
            <person name="Turner R."/>
            <person name="Yooseph S."/>
            <person name="Lu F."/>
            <person name="Nusskern D.R."/>
            <person name="Shue B.C."/>
            <person name="Zheng X.H."/>
            <person name="Zhong F."/>
            <person name="Delcher A.L."/>
            <person name="Huson D.H."/>
            <person name="Kravitz S.A."/>
            <person name="Mouchard L."/>
            <person name="Reinert K."/>
            <person name="Remington K.A."/>
            <person name="Clark A.G."/>
            <person name="Waterman M.S."/>
            <person name="Eichler E.E."/>
            <person name="Adams M.D."/>
            <person name="Hunkapiller M.W."/>
            <person name="Myers E.W."/>
            <person name="Venter J.C."/>
        </authorList>
    </citation>
    <scope>NUCLEOTIDE SEQUENCE [LARGE SCALE GENOMIC DNA]</scope>
</reference>
<reference key="5">
    <citation type="journal article" date="2004" name="Genome Res.">
        <title>The status, quality, and expansion of the NIH full-length cDNA project: the Mammalian Gene Collection (MGC).</title>
        <authorList>
            <consortium name="The MGC Project Team"/>
        </authorList>
    </citation>
    <scope>NUCLEOTIDE SEQUENCE [LARGE SCALE MRNA] (ISOFORM 1)</scope>
    <scope>NUCLEOTIDE SEQUENCE [LARGE SCALE MRNA] OF 48-705 (ISOFORM 2)</scope>
    <source>
        <tissue>Lung</tissue>
        <tissue>Prostate</tissue>
    </source>
</reference>
<reference key="6">
    <citation type="submission" date="2009-02" db="PDB data bank">
        <title>Crystal structure of the 2nd CAP-Gly domain in human restin-like protein 2 reveals a swapped-dimer.</title>
        <authorList>
            <consortium name="RIKEN structural genomics initiative (RSGI)"/>
        </authorList>
    </citation>
    <scope>X-RAY CRYSTALLOGRAPHY (2.5 ANGSTROMS) OF 482-565</scope>
</reference>